<sequence length="69" mass="7686">MKMIKVKVIGRNIEKEIEWREGMKVRDILRAVGFNTESAIAKVNGKVVLEDDEVKDGDFVEVIPVVSGG</sequence>
<keyword id="KW-0002">3D-structure</keyword>
<keyword id="KW-1017">Isopeptide bond</keyword>
<keyword id="KW-0547">Nucleotide-binding</keyword>
<keyword id="KW-0597">Phosphoprotein</keyword>
<keyword id="KW-1185">Reference proteome</keyword>
<keyword id="KW-0832">Ubl conjugation</keyword>
<keyword id="KW-0833">Ubl conjugation pathway</keyword>
<feature type="chain" id="PRO_0000441761" description="Small archaeal modifier protein 2">
    <location>
        <begin position="1"/>
        <end position="69"/>
    </location>
</feature>
<feature type="modified residue" description="1-thioglycine; alternate" evidence="1">
    <location>
        <position position="69"/>
    </location>
</feature>
<feature type="modified residue" description="Glycyl adenylate; alternate" evidence="1">
    <location>
        <position position="69"/>
    </location>
</feature>
<feature type="cross-link" description="Glycyl lysine isopeptide (Lys-Gly) (interchain with G-Cter in SAMP2)" evidence="1">
    <location>
        <position position="55"/>
    </location>
</feature>
<feature type="cross-link" description="Glycyl lysine isopeptide (Gly-Lys) (interchain with K-? in acceptor proteins); alternate" evidence="1">
    <location>
        <position position="69"/>
    </location>
</feature>
<feature type="strand" evidence="10">
    <location>
        <begin position="6"/>
        <end position="8"/>
    </location>
</feature>
<feature type="turn" evidence="10">
    <location>
        <begin position="9"/>
        <end position="12"/>
    </location>
</feature>
<feature type="helix" evidence="10">
    <location>
        <begin position="25"/>
        <end position="31"/>
    </location>
</feature>
<feature type="turn" evidence="10">
    <location>
        <begin position="36"/>
        <end position="38"/>
    </location>
</feature>
<feature type="strand" evidence="10">
    <location>
        <begin position="39"/>
        <end position="43"/>
    </location>
</feature>
<feature type="strand" evidence="10">
    <location>
        <begin position="46"/>
        <end position="48"/>
    </location>
</feature>
<feature type="strand" evidence="9">
    <location>
        <begin position="50"/>
        <end position="52"/>
    </location>
</feature>
<feature type="strand" evidence="10">
    <location>
        <begin position="60"/>
        <end position="64"/>
    </location>
</feature>
<dbReference type="EMBL" id="AE009950">
    <property type="protein sequence ID" value="AAL81185.1"/>
    <property type="molecule type" value="Genomic_DNA"/>
</dbReference>
<dbReference type="PDB" id="1RWS">
    <property type="method" value="NMR"/>
    <property type="chains" value="A=2-69"/>
</dbReference>
<dbReference type="PDB" id="1SF0">
    <property type="method" value="NMR"/>
    <property type="chains" value="A=2-69"/>
</dbReference>
<dbReference type="PDB" id="5LDA">
    <property type="method" value="X-ray"/>
    <property type="resolution" value="1.90 A"/>
    <property type="chains" value="B=1-69"/>
</dbReference>
<dbReference type="PDBsum" id="1RWS"/>
<dbReference type="PDBsum" id="1SF0"/>
<dbReference type="PDBsum" id="5LDA"/>
<dbReference type="SMR" id="Q8U1Z3"/>
<dbReference type="STRING" id="186497.PF1061"/>
<dbReference type="PaxDb" id="186497-PF1061"/>
<dbReference type="KEGG" id="pfu:PF1061"/>
<dbReference type="PATRIC" id="fig|186497.12.peg.1122"/>
<dbReference type="eggNOG" id="arCOG00535">
    <property type="taxonomic scope" value="Archaea"/>
</dbReference>
<dbReference type="HOGENOM" id="CLU_114601_9_4_2"/>
<dbReference type="PhylomeDB" id="Q8U1Z3"/>
<dbReference type="SABIO-RK" id="Q8U1Z3"/>
<dbReference type="EvolutionaryTrace" id="Q8U1Z3"/>
<dbReference type="Proteomes" id="UP000001013">
    <property type="component" value="Chromosome"/>
</dbReference>
<dbReference type="GO" id="GO:0000166">
    <property type="term" value="F:nucleotide binding"/>
    <property type="evidence" value="ECO:0007669"/>
    <property type="project" value="UniProtKB-KW"/>
</dbReference>
<dbReference type="CDD" id="cd17506">
    <property type="entry name" value="Ubl_SAMP2_like"/>
    <property type="match status" value="1"/>
</dbReference>
<dbReference type="Gene3D" id="3.10.20.30">
    <property type="match status" value="1"/>
</dbReference>
<dbReference type="InterPro" id="IPR012675">
    <property type="entry name" value="Beta-grasp_dom_sf"/>
</dbReference>
<dbReference type="InterPro" id="IPR016155">
    <property type="entry name" value="Mopterin_synth/thiamin_S_b"/>
</dbReference>
<dbReference type="InterPro" id="IPR003749">
    <property type="entry name" value="ThiS/MoaD-like"/>
</dbReference>
<dbReference type="NCBIfam" id="NF006231">
    <property type="entry name" value="PRK08364.1"/>
    <property type="match status" value="1"/>
</dbReference>
<dbReference type="Pfam" id="PF02597">
    <property type="entry name" value="ThiS"/>
    <property type="match status" value="1"/>
</dbReference>
<dbReference type="SUPFAM" id="SSF54285">
    <property type="entry name" value="MoaD/ThiS"/>
    <property type="match status" value="1"/>
</dbReference>
<proteinExistence type="evidence at protein level"/>
<evidence type="ECO:0000250" key="1">
    <source>
        <dbReference type="UniProtKB" id="D4GZE7"/>
    </source>
</evidence>
<evidence type="ECO:0000303" key="2">
    <source>
    </source>
</evidence>
<evidence type="ECO:0000305" key="3">
    <source>
    </source>
</evidence>
<evidence type="ECO:0000312" key="4">
    <source>
        <dbReference type="EMBL" id="AAL81185.1"/>
    </source>
</evidence>
<evidence type="ECO:0000312" key="5">
    <source>
        <dbReference type="Proteomes" id="UP000001013"/>
    </source>
</evidence>
<evidence type="ECO:0007744" key="6">
    <source>
        <dbReference type="PDB" id="1RWS"/>
    </source>
</evidence>
<evidence type="ECO:0007744" key="7">
    <source>
        <dbReference type="PDB" id="1SF0"/>
    </source>
</evidence>
<evidence type="ECO:0007744" key="8">
    <source>
        <dbReference type="PDB" id="5LDA"/>
    </source>
</evidence>
<evidence type="ECO:0007829" key="9">
    <source>
        <dbReference type="PDB" id="1RWS"/>
    </source>
</evidence>
<evidence type="ECO:0007829" key="10">
    <source>
        <dbReference type="PDB" id="5LDA"/>
    </source>
</evidence>
<comment type="function">
    <text evidence="1 3">Functions as a protein modifier covalently attached to lysine residues of substrate proteins, as well as a sulfur carrier in tRNA thiolation. The protein modification process is termed sampylation and involves the formation of an isopeptide bond between the SAMP2 C-terminal glycine carboxylate and the epsilon-amino group of lysine residues on target proteins. Is able to form polymeric chains with itself likely at Lys-55, similar to ubiquitin and other ubiquitin-like proteins. May serve as a proteolytic signal in the cell to target proteins for degradation by proteasomes.</text>
</comment>
<comment type="PTM">
    <text evidence="1">The C-terminal glycine is likely acyl-adenylated (-COAMP) by UbaA, and also probably thiocarboxylated (-COSH) to function in sulfur transfer.</text>
</comment>
<organism>
    <name type="scientific">Pyrococcus furiosus (strain ATCC 43587 / DSM 3638 / JCM 8422 / Vc1)</name>
    <dbReference type="NCBI Taxonomy" id="186497"/>
    <lineage>
        <taxon>Archaea</taxon>
        <taxon>Methanobacteriati</taxon>
        <taxon>Methanobacteriota</taxon>
        <taxon>Thermococci</taxon>
        <taxon>Thermococcales</taxon>
        <taxon>Thermococcaceae</taxon>
        <taxon>Pyrococcus</taxon>
    </lineage>
</organism>
<name>SAMP2_PYRFU</name>
<accession>Q8U1Z3</accession>
<reference key="1">
    <citation type="journal article" date="1999" name="Genetics">
        <title>Divergence of the hyperthermophilic archaea Pyrococcus furiosus and P. horikoshii inferred from complete genomic sequences.</title>
        <authorList>
            <person name="Maeder D.L."/>
            <person name="Weiss R.B."/>
            <person name="Dunn D.M."/>
            <person name="Cherry J.L."/>
            <person name="Gonzalez J.M."/>
            <person name="DiRuggiero J."/>
            <person name="Robb F.T."/>
        </authorList>
    </citation>
    <scope>NUCLEOTIDE SEQUENCE [LARGE SCALE GENOMIC DNA]</scope>
    <source>
        <strain evidence="5">ATCC 43587 / DSM 3638 / JCM 8422 / Vc1</strain>
    </source>
</reference>
<reference evidence="6 7" key="2">
    <citation type="journal article" date="2004" name="J. Struct. Funct. Genomics">
        <title>Backbone solution structures of proteins using residual dipolar couplings: application to a novel structural genomics target.</title>
        <authorList>
            <person name="Valafar H."/>
            <person name="Mayer K.L."/>
            <person name="Bougault C.M."/>
            <person name="LeBlond P.D."/>
            <person name="Jenney F.E."/>
            <person name="Brereton P.S."/>
            <person name="Adams M.W."/>
            <person name="Prestegard J.H."/>
        </authorList>
    </citation>
    <scope>STRUCTURE BY NMR OF 2-69</scope>
</reference>
<reference evidence="8" key="3">
    <citation type="journal article" date="2017" name="Structure">
        <title>Structural insight into ubiquitin-like protein recognition and oligomeric states of JAMM/MPN+ proteases.</title>
        <authorList>
            <person name="Cao S."/>
            <person name="Engilberge S."/>
            <person name="Girard E."/>
            <person name="Gabel F."/>
            <person name="Franzetti B."/>
            <person name="Maupin-Furlow J.A."/>
        </authorList>
    </citation>
    <scope>X-RAY CRYSTALLOGRAPHY (1.90 ANGSTROMS) IN COMPLEX WITH PFJAMM1 PROTEIN</scope>
    <scope>FUNCTION</scope>
</reference>
<protein>
    <recommendedName>
        <fullName evidence="2">Small archaeal modifier protein 2</fullName>
        <shortName evidence="2">SAMP2</shortName>
    </recommendedName>
    <alternativeName>
        <fullName evidence="2">Ubiquitin-like small archaeal modifier protein 2</fullName>
    </alternativeName>
</protein>
<gene>
    <name evidence="2" type="primary">samp2</name>
    <name evidence="4" type="ordered locus">PF1061</name>
</gene>